<protein>
    <recommendedName>
        <fullName evidence="1">Ribose-5-phosphate isomerase A</fullName>
        <ecNumber evidence="1">5.3.1.6</ecNumber>
    </recommendedName>
    <alternativeName>
        <fullName evidence="1">Phosphoriboisomerase A</fullName>
        <shortName evidence="1">PRI</shortName>
    </alternativeName>
</protein>
<comment type="function">
    <text evidence="1">Catalyzes the reversible conversion of ribose-5-phosphate to ribulose 5-phosphate.</text>
</comment>
<comment type="catalytic activity">
    <reaction evidence="1">
        <text>aldehydo-D-ribose 5-phosphate = D-ribulose 5-phosphate</text>
        <dbReference type="Rhea" id="RHEA:14657"/>
        <dbReference type="ChEBI" id="CHEBI:58121"/>
        <dbReference type="ChEBI" id="CHEBI:58273"/>
        <dbReference type="EC" id="5.3.1.6"/>
    </reaction>
</comment>
<comment type="pathway">
    <text evidence="1">Carbohydrate degradation; pentose phosphate pathway; D-ribose 5-phosphate from D-ribulose 5-phosphate (non-oxidative stage): step 1/1.</text>
</comment>
<comment type="subunit">
    <text evidence="1">Homodimer.</text>
</comment>
<comment type="similarity">
    <text evidence="1">Belongs to the ribose 5-phosphate isomerase family.</text>
</comment>
<name>RPIA_STRE4</name>
<organism>
    <name type="scientific">Streptococcus equi subsp. equi (strain 4047)</name>
    <dbReference type="NCBI Taxonomy" id="553482"/>
    <lineage>
        <taxon>Bacteria</taxon>
        <taxon>Bacillati</taxon>
        <taxon>Bacillota</taxon>
        <taxon>Bacilli</taxon>
        <taxon>Lactobacillales</taxon>
        <taxon>Streptococcaceae</taxon>
        <taxon>Streptococcus</taxon>
    </lineage>
</organism>
<sequence>MEALKKIAGVTAAQYVTDGMTIGLGTGSTAYYFVEEIGRRIKEEGLQVVGVTTSSVTTKQAEGLGIPLTSIDDIDCIDLTVDGADEVDKAFNGIKGGGAALLMEKIVATPTKEYIWVVDESKLVDHLGAFKLPVEVVQYGADRLFRVFERAGYKPSFRMKGDKRLITDMQNFIIDLNLGCIENPCEFGRLLDQTVGVVEHGLFNGMVDKVIVAGQAGVTVLEANQST</sequence>
<accession>C0M7X6</accession>
<dbReference type="EC" id="5.3.1.6" evidence="1"/>
<dbReference type="EMBL" id="FM204883">
    <property type="protein sequence ID" value="CAW94173.1"/>
    <property type="molecule type" value="Genomic_DNA"/>
</dbReference>
<dbReference type="RefSeq" id="WP_012679692.1">
    <property type="nucleotide sequence ID" value="NC_012471.1"/>
</dbReference>
<dbReference type="SMR" id="C0M7X6"/>
<dbReference type="KEGG" id="seu:SEQ_1356"/>
<dbReference type="HOGENOM" id="CLU_056590_1_0_9"/>
<dbReference type="OrthoDB" id="5870696at2"/>
<dbReference type="UniPathway" id="UPA00115">
    <property type="reaction ID" value="UER00412"/>
</dbReference>
<dbReference type="Proteomes" id="UP000001365">
    <property type="component" value="Chromosome"/>
</dbReference>
<dbReference type="GO" id="GO:0004751">
    <property type="term" value="F:ribose-5-phosphate isomerase activity"/>
    <property type="evidence" value="ECO:0007669"/>
    <property type="project" value="UniProtKB-UniRule"/>
</dbReference>
<dbReference type="GO" id="GO:0009052">
    <property type="term" value="P:pentose-phosphate shunt, non-oxidative branch"/>
    <property type="evidence" value="ECO:0007669"/>
    <property type="project" value="UniProtKB-UniRule"/>
</dbReference>
<dbReference type="CDD" id="cd01398">
    <property type="entry name" value="RPI_A"/>
    <property type="match status" value="1"/>
</dbReference>
<dbReference type="FunFam" id="3.40.50.1360:FF:000001">
    <property type="entry name" value="Ribose-5-phosphate isomerase A"/>
    <property type="match status" value="1"/>
</dbReference>
<dbReference type="Gene3D" id="3.30.70.260">
    <property type="match status" value="1"/>
</dbReference>
<dbReference type="Gene3D" id="3.40.50.1360">
    <property type="match status" value="1"/>
</dbReference>
<dbReference type="HAMAP" id="MF_00170">
    <property type="entry name" value="Rib_5P_isom_A"/>
    <property type="match status" value="1"/>
</dbReference>
<dbReference type="InterPro" id="IPR037171">
    <property type="entry name" value="NagB/RpiA_transferase-like"/>
</dbReference>
<dbReference type="InterPro" id="IPR050262">
    <property type="entry name" value="Ribose-5P_isomerase"/>
</dbReference>
<dbReference type="InterPro" id="IPR020672">
    <property type="entry name" value="Ribose5P_isomerase_typA_subgr"/>
</dbReference>
<dbReference type="InterPro" id="IPR004788">
    <property type="entry name" value="Ribose5P_isomerase_type_A"/>
</dbReference>
<dbReference type="NCBIfam" id="NF001924">
    <property type="entry name" value="PRK00702.1"/>
    <property type="match status" value="1"/>
</dbReference>
<dbReference type="NCBIfam" id="TIGR00021">
    <property type="entry name" value="rpiA"/>
    <property type="match status" value="1"/>
</dbReference>
<dbReference type="PANTHER" id="PTHR43748">
    <property type="entry name" value="RIBOSE-5-PHOSPHATE ISOMERASE 3, CHLOROPLASTIC-RELATED"/>
    <property type="match status" value="1"/>
</dbReference>
<dbReference type="PANTHER" id="PTHR43748:SF3">
    <property type="entry name" value="RIBOSE-5-PHOSPHATE ISOMERASE 3, CHLOROPLASTIC-RELATED"/>
    <property type="match status" value="1"/>
</dbReference>
<dbReference type="Pfam" id="PF06026">
    <property type="entry name" value="Rib_5-P_isom_A"/>
    <property type="match status" value="1"/>
</dbReference>
<dbReference type="SUPFAM" id="SSF75445">
    <property type="entry name" value="D-ribose-5-phosphate isomerase (RpiA), lid domain"/>
    <property type="match status" value="1"/>
</dbReference>
<dbReference type="SUPFAM" id="SSF100950">
    <property type="entry name" value="NagB/RpiA/CoA transferase-like"/>
    <property type="match status" value="1"/>
</dbReference>
<reference key="1">
    <citation type="journal article" date="2009" name="PLoS Pathog.">
        <title>Genomic evidence for the evolution of Streptococcus equi: host restriction, increased virulence, and genetic exchange with human pathogens.</title>
        <authorList>
            <person name="Holden M.T.G."/>
            <person name="Heather Z."/>
            <person name="Paillot R."/>
            <person name="Steward K.F."/>
            <person name="Webb K."/>
            <person name="Ainslie F."/>
            <person name="Jourdan T."/>
            <person name="Bason N.C."/>
            <person name="Holroyd N.E."/>
            <person name="Mungall K."/>
            <person name="Quail M.A."/>
            <person name="Sanders M."/>
            <person name="Simmonds M."/>
            <person name="Willey D."/>
            <person name="Brooks K."/>
            <person name="Aanensen D.M."/>
            <person name="Spratt B.G."/>
            <person name="Jolley K.A."/>
            <person name="Maiden M.C.J."/>
            <person name="Kehoe M."/>
            <person name="Chanter N."/>
            <person name="Bentley S.D."/>
            <person name="Robinson C."/>
            <person name="Maskell D.J."/>
            <person name="Parkhill J."/>
            <person name="Waller A.S."/>
        </authorList>
    </citation>
    <scope>NUCLEOTIDE SEQUENCE [LARGE SCALE GENOMIC DNA]</scope>
    <source>
        <strain>4047</strain>
    </source>
</reference>
<feature type="chain" id="PRO_1000194722" description="Ribose-5-phosphate isomerase A">
    <location>
        <begin position="1"/>
        <end position="227"/>
    </location>
</feature>
<feature type="active site" description="Proton acceptor" evidence="1">
    <location>
        <position position="104"/>
    </location>
</feature>
<feature type="binding site" evidence="1">
    <location>
        <begin position="26"/>
        <end position="29"/>
    </location>
    <ligand>
        <name>substrate</name>
    </ligand>
</feature>
<feature type="binding site" evidence="1">
    <location>
        <begin position="82"/>
        <end position="85"/>
    </location>
    <ligand>
        <name>substrate</name>
    </ligand>
</feature>
<feature type="binding site" evidence="1">
    <location>
        <begin position="95"/>
        <end position="98"/>
    </location>
    <ligand>
        <name>substrate</name>
    </ligand>
</feature>
<feature type="binding site" evidence="1">
    <location>
        <position position="122"/>
    </location>
    <ligand>
        <name>substrate</name>
    </ligand>
</feature>
<gene>
    <name evidence="1" type="primary">rpiA</name>
    <name type="ordered locus">SEQ_1356</name>
</gene>
<proteinExistence type="inferred from homology"/>
<evidence type="ECO:0000255" key="1">
    <source>
        <dbReference type="HAMAP-Rule" id="MF_00170"/>
    </source>
</evidence>
<keyword id="KW-0413">Isomerase</keyword>